<organism>
    <name type="scientific">Arabidopsis thaliana</name>
    <name type="common">Mouse-ear cress</name>
    <dbReference type="NCBI Taxonomy" id="3702"/>
    <lineage>
        <taxon>Eukaryota</taxon>
        <taxon>Viridiplantae</taxon>
        <taxon>Streptophyta</taxon>
        <taxon>Embryophyta</taxon>
        <taxon>Tracheophyta</taxon>
        <taxon>Spermatophyta</taxon>
        <taxon>Magnoliopsida</taxon>
        <taxon>eudicotyledons</taxon>
        <taxon>Gunneridae</taxon>
        <taxon>Pentapetalae</taxon>
        <taxon>rosids</taxon>
        <taxon>malvids</taxon>
        <taxon>Brassicales</taxon>
        <taxon>Brassicaceae</taxon>
        <taxon>Camelineae</taxon>
        <taxon>Arabidopsis</taxon>
    </lineage>
</organism>
<reference key="1">
    <citation type="journal article" date="1992" name="Plant Cell">
        <title>The small genome of Arabidopsis contains at least nine expressed beta-tubulin genes.</title>
        <authorList>
            <person name="Snustad D.P."/>
            <person name="Haas N.A."/>
            <person name="Kopczak S.D."/>
            <person name="Silflow C.D."/>
        </authorList>
    </citation>
    <scope>NUCLEOTIDE SEQUENCE [GENOMIC DNA]</scope>
    <source>
        <strain>cv. Columbia</strain>
    </source>
</reference>
<reference key="2">
    <citation type="journal article" date="1998" name="DNA Res.">
        <title>Structural analysis of Arabidopsis thaliana chromosome 5. IV. Sequence features of the regions of 1,456,315 bp covered by nineteen physically assigned P1 and TAC clones.</title>
        <authorList>
            <person name="Sato S."/>
            <person name="Kaneko T."/>
            <person name="Kotani H."/>
            <person name="Nakamura Y."/>
            <person name="Asamizu E."/>
            <person name="Miyajima N."/>
            <person name="Tabata S."/>
        </authorList>
    </citation>
    <scope>NUCLEOTIDE SEQUENCE [LARGE SCALE GENOMIC DNA]</scope>
    <source>
        <strain>cv. Columbia</strain>
    </source>
</reference>
<reference key="3">
    <citation type="journal article" date="2000" name="DNA Res.">
        <title>Structural analysis of Arabidopsis thaliana chromosome 5. X. Sequence features of the regions of 3,076,755 bp covered by sixty P1 and TAC clones.</title>
        <authorList>
            <person name="Sato S."/>
            <person name="Nakamura Y."/>
            <person name="Kaneko T."/>
            <person name="Katoh T."/>
            <person name="Asamizu E."/>
            <person name="Kotani H."/>
            <person name="Tabata S."/>
        </authorList>
    </citation>
    <scope>NUCLEOTIDE SEQUENCE [LARGE SCALE GENOMIC DNA]</scope>
    <source>
        <strain>cv. Columbia</strain>
    </source>
</reference>
<reference key="4">
    <citation type="journal article" date="2017" name="Plant J.">
        <title>Araport11: a complete reannotation of the Arabidopsis thaliana reference genome.</title>
        <authorList>
            <person name="Cheng C.Y."/>
            <person name="Krishnakumar V."/>
            <person name="Chan A.P."/>
            <person name="Thibaud-Nissen F."/>
            <person name="Schobel S."/>
            <person name="Town C.D."/>
        </authorList>
    </citation>
    <scope>GENOME REANNOTATION</scope>
    <source>
        <strain>cv. Columbia</strain>
    </source>
</reference>
<reference key="5">
    <citation type="journal article" date="2003" name="Science">
        <title>Empirical analysis of transcriptional activity in the Arabidopsis genome.</title>
        <authorList>
            <person name="Yamada K."/>
            <person name="Lim J."/>
            <person name="Dale J.M."/>
            <person name="Chen H."/>
            <person name="Shinn P."/>
            <person name="Palm C.J."/>
            <person name="Southwick A.M."/>
            <person name="Wu H.C."/>
            <person name="Kim C.J."/>
            <person name="Nguyen M."/>
            <person name="Pham P.K."/>
            <person name="Cheuk R.F."/>
            <person name="Karlin-Newmann G."/>
            <person name="Liu S.X."/>
            <person name="Lam B."/>
            <person name="Sakano H."/>
            <person name="Wu T."/>
            <person name="Yu G."/>
            <person name="Miranda M."/>
            <person name="Quach H.L."/>
            <person name="Tripp M."/>
            <person name="Chang C.H."/>
            <person name="Lee J.M."/>
            <person name="Toriumi M.J."/>
            <person name="Chan M.M."/>
            <person name="Tang C.C."/>
            <person name="Onodera C.S."/>
            <person name="Deng J.M."/>
            <person name="Akiyama K."/>
            <person name="Ansari Y."/>
            <person name="Arakawa T."/>
            <person name="Banh J."/>
            <person name="Banno F."/>
            <person name="Bowser L."/>
            <person name="Brooks S.Y."/>
            <person name="Carninci P."/>
            <person name="Chao Q."/>
            <person name="Choy N."/>
            <person name="Enju A."/>
            <person name="Goldsmith A.D."/>
            <person name="Gurjal M."/>
            <person name="Hansen N.F."/>
            <person name="Hayashizaki Y."/>
            <person name="Johnson-Hopson C."/>
            <person name="Hsuan V.W."/>
            <person name="Iida K."/>
            <person name="Karnes M."/>
            <person name="Khan S."/>
            <person name="Koesema E."/>
            <person name="Ishida J."/>
            <person name="Jiang P.X."/>
            <person name="Jones T."/>
            <person name="Kawai J."/>
            <person name="Kamiya A."/>
            <person name="Meyers C."/>
            <person name="Nakajima M."/>
            <person name="Narusaka M."/>
            <person name="Seki M."/>
            <person name="Sakurai T."/>
            <person name="Satou M."/>
            <person name="Tamse R."/>
            <person name="Vaysberg M."/>
            <person name="Wallender E.K."/>
            <person name="Wong C."/>
            <person name="Yamamura Y."/>
            <person name="Yuan S."/>
            <person name="Shinozaki K."/>
            <person name="Davis R.W."/>
            <person name="Theologis A."/>
            <person name="Ecker J.R."/>
        </authorList>
    </citation>
    <scope>NUCLEOTIDE SEQUENCE [LARGE SCALE MRNA]</scope>
    <source>
        <strain>cv. Columbia</strain>
    </source>
</reference>
<protein>
    <recommendedName>
        <fullName>Tubulin beta-3 chain</fullName>
    </recommendedName>
</protein>
<dbReference type="EMBL" id="M84701">
    <property type="protein sequence ID" value="AAA32882.1"/>
    <property type="molecule type" value="Genomic_DNA"/>
</dbReference>
<dbReference type="EMBL" id="AB009053">
    <property type="protein sequence ID" value="BAB10838.1"/>
    <property type="molecule type" value="Genomic_DNA"/>
</dbReference>
<dbReference type="EMBL" id="AB020751">
    <property type="protein sequence ID" value="BAB10838.1"/>
    <property type="status" value="JOINED"/>
    <property type="molecule type" value="Genomic_DNA"/>
</dbReference>
<dbReference type="EMBL" id="CP002688">
    <property type="protein sequence ID" value="AED97644.1"/>
    <property type="molecule type" value="Genomic_DNA"/>
</dbReference>
<dbReference type="EMBL" id="AF367332">
    <property type="protein sequence ID" value="AAK32919.1"/>
    <property type="status" value="ALT_FRAME"/>
    <property type="molecule type" value="mRNA"/>
</dbReference>
<dbReference type="EMBL" id="AY060550">
    <property type="protein sequence ID" value="AAL31181.1"/>
    <property type="molecule type" value="mRNA"/>
</dbReference>
<dbReference type="EMBL" id="AY093986">
    <property type="protein sequence ID" value="AAM16247.1"/>
    <property type="status" value="ALT_FRAME"/>
    <property type="molecule type" value="mRNA"/>
</dbReference>
<dbReference type="PIR" id="JQ1587">
    <property type="entry name" value="JQ1587"/>
</dbReference>
<dbReference type="RefSeq" id="NP_568960.1">
    <property type="nucleotide sequence ID" value="NM_125665.4"/>
</dbReference>
<dbReference type="SMR" id="Q9ASR0"/>
<dbReference type="BioGRID" id="21633">
    <property type="interactions" value="5"/>
</dbReference>
<dbReference type="BioGRID" id="21634">
    <property type="interactions" value="3"/>
</dbReference>
<dbReference type="FunCoup" id="Q9ASR0">
    <property type="interactions" value="1792"/>
</dbReference>
<dbReference type="IntAct" id="Q9ASR0">
    <property type="interactions" value="1"/>
</dbReference>
<dbReference type="MINT" id="Q9ASR0"/>
<dbReference type="STRING" id="3702.Q9ASR0"/>
<dbReference type="EnsemblPlants" id="AT5G62690.1">
    <property type="protein sequence ID" value="AT5G62690.1"/>
    <property type="gene ID" value="AT5G62690"/>
</dbReference>
<dbReference type="EnsemblPlants" id="AT5G62700.1">
    <property type="protein sequence ID" value="AT5G62700.1"/>
    <property type="gene ID" value="AT5G62700"/>
</dbReference>
<dbReference type="GeneID" id="836391"/>
<dbReference type="Gramene" id="AT5G62690.1">
    <property type="protein sequence ID" value="AT5G62690.1"/>
    <property type="gene ID" value="AT5G62690"/>
</dbReference>
<dbReference type="Gramene" id="AT5G62700.1">
    <property type="protein sequence ID" value="AT5G62700.1"/>
    <property type="gene ID" value="AT5G62700"/>
</dbReference>
<dbReference type="KEGG" id="ath:AT5G62690"/>
<dbReference type="KEGG" id="ath:AT5G62700"/>
<dbReference type="Araport" id="AT5G62700"/>
<dbReference type="TAIR" id="AT5G62700">
    <property type="gene designation" value="TUB3"/>
</dbReference>
<dbReference type="HOGENOM" id="CLU_015718_1_1_1"/>
<dbReference type="InParanoid" id="Q9ASR0"/>
<dbReference type="OMA" id="ISMIVHI"/>
<dbReference type="OrthoDB" id="1045146at2759"/>
<dbReference type="PhylomeDB" id="Q9ASR0"/>
<dbReference type="CD-CODE" id="4299E36E">
    <property type="entry name" value="Nucleolus"/>
</dbReference>
<dbReference type="PRO" id="PR:Q9ASR0"/>
<dbReference type="Proteomes" id="UP000006548">
    <property type="component" value="Chromosome 5"/>
</dbReference>
<dbReference type="ExpressionAtlas" id="Q9ASR0">
    <property type="expression patterns" value="baseline and differential"/>
</dbReference>
<dbReference type="GO" id="GO:0005737">
    <property type="term" value="C:cytoplasm"/>
    <property type="evidence" value="ECO:0007669"/>
    <property type="project" value="UniProtKB-KW"/>
</dbReference>
<dbReference type="GO" id="GO:0005874">
    <property type="term" value="C:microtubule"/>
    <property type="evidence" value="ECO:0007669"/>
    <property type="project" value="UniProtKB-KW"/>
</dbReference>
<dbReference type="GO" id="GO:0005525">
    <property type="term" value="F:GTP binding"/>
    <property type="evidence" value="ECO:0007669"/>
    <property type="project" value="UniProtKB-KW"/>
</dbReference>
<dbReference type="GO" id="GO:0003924">
    <property type="term" value="F:GTPase activity"/>
    <property type="evidence" value="ECO:0007669"/>
    <property type="project" value="InterPro"/>
</dbReference>
<dbReference type="GO" id="GO:0046872">
    <property type="term" value="F:metal ion binding"/>
    <property type="evidence" value="ECO:0007669"/>
    <property type="project" value="UniProtKB-KW"/>
</dbReference>
<dbReference type="GO" id="GO:0003729">
    <property type="term" value="F:mRNA binding"/>
    <property type="evidence" value="ECO:0007669"/>
    <property type="project" value="UniProtKB-ARBA"/>
</dbReference>
<dbReference type="GO" id="GO:0005200">
    <property type="term" value="F:structural constituent of cytoskeleton"/>
    <property type="evidence" value="ECO:0007669"/>
    <property type="project" value="InterPro"/>
</dbReference>
<dbReference type="GO" id="GO:0007017">
    <property type="term" value="P:microtubule-based process"/>
    <property type="evidence" value="ECO:0007669"/>
    <property type="project" value="InterPro"/>
</dbReference>
<dbReference type="CDD" id="cd02187">
    <property type="entry name" value="beta_tubulin"/>
    <property type="match status" value="1"/>
</dbReference>
<dbReference type="FunFam" id="1.10.287.600:FF:000002">
    <property type="entry name" value="Tubulin beta chain"/>
    <property type="match status" value="1"/>
</dbReference>
<dbReference type="FunFam" id="3.30.1330.20:FF:000002">
    <property type="entry name" value="Tubulin beta chain"/>
    <property type="match status" value="1"/>
</dbReference>
<dbReference type="FunFam" id="3.40.50.1440:FF:000005">
    <property type="entry name" value="Tubulin beta chain"/>
    <property type="match status" value="1"/>
</dbReference>
<dbReference type="Gene3D" id="1.10.287.600">
    <property type="entry name" value="Helix hairpin bin"/>
    <property type="match status" value="1"/>
</dbReference>
<dbReference type="Gene3D" id="3.30.1330.20">
    <property type="entry name" value="Tubulin/FtsZ, C-terminal domain"/>
    <property type="match status" value="1"/>
</dbReference>
<dbReference type="Gene3D" id="3.40.50.1440">
    <property type="entry name" value="Tubulin/FtsZ, GTPase domain"/>
    <property type="match status" value="1"/>
</dbReference>
<dbReference type="InterPro" id="IPR013838">
    <property type="entry name" value="Beta-tubulin_BS"/>
</dbReference>
<dbReference type="InterPro" id="IPR002453">
    <property type="entry name" value="Beta_tubulin"/>
</dbReference>
<dbReference type="InterPro" id="IPR008280">
    <property type="entry name" value="Tub_FtsZ_C"/>
</dbReference>
<dbReference type="InterPro" id="IPR000217">
    <property type="entry name" value="Tubulin"/>
</dbReference>
<dbReference type="InterPro" id="IPR037103">
    <property type="entry name" value="Tubulin/FtsZ-like_C"/>
</dbReference>
<dbReference type="InterPro" id="IPR018316">
    <property type="entry name" value="Tubulin/FtsZ_2-layer-sand-dom"/>
</dbReference>
<dbReference type="InterPro" id="IPR036525">
    <property type="entry name" value="Tubulin/FtsZ_GTPase_sf"/>
</dbReference>
<dbReference type="InterPro" id="IPR023123">
    <property type="entry name" value="Tubulin_C"/>
</dbReference>
<dbReference type="InterPro" id="IPR017975">
    <property type="entry name" value="Tubulin_CS"/>
</dbReference>
<dbReference type="InterPro" id="IPR003008">
    <property type="entry name" value="Tubulin_FtsZ_GTPase"/>
</dbReference>
<dbReference type="PANTHER" id="PTHR11588">
    <property type="entry name" value="TUBULIN"/>
    <property type="match status" value="1"/>
</dbReference>
<dbReference type="Pfam" id="PF00091">
    <property type="entry name" value="Tubulin"/>
    <property type="match status" value="1"/>
</dbReference>
<dbReference type="Pfam" id="PF03953">
    <property type="entry name" value="Tubulin_C"/>
    <property type="match status" value="1"/>
</dbReference>
<dbReference type="PRINTS" id="PR01163">
    <property type="entry name" value="BETATUBULIN"/>
</dbReference>
<dbReference type="PRINTS" id="PR01161">
    <property type="entry name" value="TUBULIN"/>
</dbReference>
<dbReference type="SMART" id="SM00864">
    <property type="entry name" value="Tubulin"/>
    <property type="match status" value="1"/>
</dbReference>
<dbReference type="SMART" id="SM00865">
    <property type="entry name" value="Tubulin_C"/>
    <property type="match status" value="1"/>
</dbReference>
<dbReference type="SUPFAM" id="SSF55307">
    <property type="entry name" value="Tubulin C-terminal domain-like"/>
    <property type="match status" value="1"/>
</dbReference>
<dbReference type="SUPFAM" id="SSF52490">
    <property type="entry name" value="Tubulin nucleotide-binding domain-like"/>
    <property type="match status" value="1"/>
</dbReference>
<dbReference type="PROSITE" id="PS00227">
    <property type="entry name" value="TUBULIN"/>
    <property type="match status" value="1"/>
</dbReference>
<dbReference type="PROSITE" id="PS00228">
    <property type="entry name" value="TUBULIN_B_AUTOREG"/>
    <property type="match status" value="1"/>
</dbReference>
<evidence type="ECO:0000250" key="1">
    <source>
        <dbReference type="UniProtKB" id="P68363"/>
    </source>
</evidence>
<evidence type="ECO:0000250" key="2">
    <source>
        <dbReference type="UniProtKB" id="Q13509"/>
    </source>
</evidence>
<evidence type="ECO:0000256" key="3">
    <source>
        <dbReference type="SAM" id="MobiDB-lite"/>
    </source>
</evidence>
<evidence type="ECO:0000305" key="4"/>
<proteinExistence type="evidence at transcript level"/>
<sequence>MREILHIQGGQCGNQIGAKFWEVVCAEHGIDPTGRYTGDSDLQLERINVYYNEASCGRFVPRAVLMDLEPGTMDSLRSGPYGQTFRPDNFVFGQSGAGNNWAKGHYTEGAELIDSVLDVVRKEAENCDCLQGFQVCHSLGGGTGSGMGTLLISKIREEYPDRMMLTFSVFPSPKVSDTVVEPYNATLSVHQLVENADECMVLDNEALYDICFRTLKLTTPSFGDLNHLISATMSGVTCCLRFPGQLNSDLRKLAVNLIPFPRLHFFMVGFAPLTSRGSQQYRSLTVPELTQQMWDSKNMMCAADPRHGRYLTASAMFRGKMSTKEVDEQMLNVQNKNSSYFVEWIPNNVKSTVCDIPPTGLKMASTFIGNSTSIQEMFRRVSEQFTAMFRRKAFLHWYTGEGMDEMEFTEAESNMNDLVSEYQQYQDATADEEGDYEDEEEGEYQQEEEY</sequence>
<name>TBB3_ARATH</name>
<accession>Q9ASR0</accession>
<accession>P29512</accession>
<feature type="chain" id="PRO_0000419523" description="Tubulin beta-3 chain">
    <location>
        <begin position="1"/>
        <end position="450"/>
    </location>
</feature>
<feature type="region of interest" description="Disordered" evidence="3">
    <location>
        <begin position="420"/>
        <end position="450"/>
    </location>
</feature>
<feature type="compositionally biased region" description="Acidic residues" evidence="3">
    <location>
        <begin position="429"/>
        <end position="450"/>
    </location>
</feature>
<feature type="binding site" evidence="2">
    <location>
        <position position="11"/>
    </location>
    <ligand>
        <name>GTP</name>
        <dbReference type="ChEBI" id="CHEBI:37565"/>
    </ligand>
</feature>
<feature type="binding site" evidence="1">
    <location>
        <position position="69"/>
    </location>
    <ligand>
        <name>GTP</name>
        <dbReference type="ChEBI" id="CHEBI:37565"/>
    </ligand>
</feature>
<feature type="binding site" evidence="1">
    <location>
        <position position="69"/>
    </location>
    <ligand>
        <name>Mg(2+)</name>
        <dbReference type="ChEBI" id="CHEBI:18420"/>
    </ligand>
</feature>
<feature type="binding site" evidence="2">
    <location>
        <position position="138"/>
    </location>
    <ligand>
        <name>GTP</name>
        <dbReference type="ChEBI" id="CHEBI:37565"/>
    </ligand>
</feature>
<feature type="binding site" evidence="2">
    <location>
        <position position="142"/>
    </location>
    <ligand>
        <name>GTP</name>
        <dbReference type="ChEBI" id="CHEBI:37565"/>
    </ligand>
</feature>
<feature type="binding site" evidence="2">
    <location>
        <position position="143"/>
    </location>
    <ligand>
        <name>GTP</name>
        <dbReference type="ChEBI" id="CHEBI:37565"/>
    </ligand>
</feature>
<feature type="binding site" evidence="2">
    <location>
        <position position="144"/>
    </location>
    <ligand>
        <name>GTP</name>
        <dbReference type="ChEBI" id="CHEBI:37565"/>
    </ligand>
</feature>
<feature type="binding site" evidence="2">
    <location>
        <position position="204"/>
    </location>
    <ligand>
        <name>GTP</name>
        <dbReference type="ChEBI" id="CHEBI:37565"/>
    </ligand>
</feature>
<feature type="binding site" evidence="2">
    <location>
        <position position="226"/>
    </location>
    <ligand>
        <name>GTP</name>
        <dbReference type="ChEBI" id="CHEBI:37565"/>
    </ligand>
</feature>
<comment type="function">
    <text>Tubulin is the major constituent of microtubules, a cylinder consisting of laterally associated linear protofilaments composed of alpha- and beta-tubulin heterodimers. Microtubules grow by the addition of GTP-tubulin dimers to the microtubule end, where a stabilizing cap forms. Below the cap, tubulin dimers are in GDP-bound state, owing to GTPase activity of alpha-tubulin.</text>
</comment>
<comment type="cofactor">
    <cofactor evidence="1">
        <name>Mg(2+)</name>
        <dbReference type="ChEBI" id="CHEBI:18420"/>
    </cofactor>
</comment>
<comment type="subunit">
    <text>Dimer of alpha and beta chains. A typical microtubule is a hollow water-filled tube with an outer diameter of 25 nm and an inner diameter of 15 nM. Alpha-beta heterodimers associate head-to-tail to form protofilaments running lengthwise along the microtubule wall with the beta-tubulin subunit facing the microtubule plus end conferring a structural polarity. Microtubules usually have 13 protofilaments but different protofilament numbers can be found in some organisms and specialized cells.</text>
</comment>
<comment type="subcellular location">
    <subcellularLocation>
        <location>Cytoplasm</location>
        <location>Cytoskeleton</location>
    </subcellularLocation>
</comment>
<comment type="miscellaneous">
    <text>There are nine genes coding for beta-tubulin. The sequences coded by genes 2 and 3 are identical.</text>
</comment>
<comment type="similarity">
    <text evidence="4">Belongs to the tubulin family.</text>
</comment>
<comment type="sequence caution" evidence="4">
    <conflict type="frameshift">
        <sequence resource="EMBL-CDS" id="AAK32919"/>
    </conflict>
</comment>
<comment type="sequence caution" evidence="4">
    <conflict type="frameshift">
        <sequence resource="EMBL-CDS" id="AAM16247"/>
    </conflict>
</comment>
<keyword id="KW-0963">Cytoplasm</keyword>
<keyword id="KW-0206">Cytoskeleton</keyword>
<keyword id="KW-0342">GTP-binding</keyword>
<keyword id="KW-0460">Magnesium</keyword>
<keyword id="KW-0479">Metal-binding</keyword>
<keyword id="KW-0493">Microtubule</keyword>
<keyword id="KW-0547">Nucleotide-binding</keyword>
<keyword id="KW-1185">Reference proteome</keyword>
<gene>
    <name type="primary">TUBB3</name>
    <name type="synonym">TUB3</name>
    <name type="ordered locus">At5g62700</name>
    <name type="ORF">MRG21.12</name>
</gene>